<proteinExistence type="inferred from homology"/>
<organism>
    <name type="scientific">Desulfotalea psychrophila (strain LSv54 / DSM 12343)</name>
    <dbReference type="NCBI Taxonomy" id="177439"/>
    <lineage>
        <taxon>Bacteria</taxon>
        <taxon>Pseudomonadati</taxon>
        <taxon>Thermodesulfobacteriota</taxon>
        <taxon>Desulfobulbia</taxon>
        <taxon>Desulfobulbales</taxon>
        <taxon>Desulfocapsaceae</taxon>
        <taxon>Desulfotalea</taxon>
    </lineage>
</organism>
<dbReference type="EMBL" id="CR522870">
    <property type="protein sequence ID" value="CAG37342.1"/>
    <property type="molecule type" value="Genomic_DNA"/>
</dbReference>
<dbReference type="RefSeq" id="WP_011189854.1">
    <property type="nucleotide sequence ID" value="NC_006138.1"/>
</dbReference>
<dbReference type="SMR" id="Q6AJY4"/>
<dbReference type="STRING" id="177439.DP2613"/>
<dbReference type="KEGG" id="dps:DP2613"/>
<dbReference type="eggNOG" id="COG0532">
    <property type="taxonomic scope" value="Bacteria"/>
</dbReference>
<dbReference type="eggNOG" id="COG3064">
    <property type="taxonomic scope" value="Bacteria"/>
</dbReference>
<dbReference type="HOGENOM" id="CLU_006301_5_1_7"/>
<dbReference type="OrthoDB" id="9811804at2"/>
<dbReference type="Proteomes" id="UP000000602">
    <property type="component" value="Chromosome"/>
</dbReference>
<dbReference type="GO" id="GO:0005829">
    <property type="term" value="C:cytosol"/>
    <property type="evidence" value="ECO:0007669"/>
    <property type="project" value="TreeGrafter"/>
</dbReference>
<dbReference type="GO" id="GO:0005525">
    <property type="term" value="F:GTP binding"/>
    <property type="evidence" value="ECO:0007669"/>
    <property type="project" value="UniProtKB-KW"/>
</dbReference>
<dbReference type="GO" id="GO:0003924">
    <property type="term" value="F:GTPase activity"/>
    <property type="evidence" value="ECO:0007669"/>
    <property type="project" value="UniProtKB-UniRule"/>
</dbReference>
<dbReference type="GO" id="GO:0003743">
    <property type="term" value="F:translation initiation factor activity"/>
    <property type="evidence" value="ECO:0007669"/>
    <property type="project" value="UniProtKB-UniRule"/>
</dbReference>
<dbReference type="CDD" id="cd01887">
    <property type="entry name" value="IF2_eIF5B"/>
    <property type="match status" value="1"/>
</dbReference>
<dbReference type="CDD" id="cd03702">
    <property type="entry name" value="IF2_mtIF2_II"/>
    <property type="match status" value="1"/>
</dbReference>
<dbReference type="CDD" id="cd03692">
    <property type="entry name" value="mtIF2_IVc"/>
    <property type="match status" value="1"/>
</dbReference>
<dbReference type="FunFam" id="2.40.30.10:FF:000007">
    <property type="entry name" value="Translation initiation factor IF-2"/>
    <property type="match status" value="1"/>
</dbReference>
<dbReference type="FunFam" id="2.40.30.10:FF:000008">
    <property type="entry name" value="Translation initiation factor IF-2"/>
    <property type="match status" value="1"/>
</dbReference>
<dbReference type="FunFam" id="3.40.50.10050:FF:000001">
    <property type="entry name" value="Translation initiation factor IF-2"/>
    <property type="match status" value="1"/>
</dbReference>
<dbReference type="FunFam" id="3.40.50.300:FF:000019">
    <property type="entry name" value="Translation initiation factor IF-2"/>
    <property type="match status" value="1"/>
</dbReference>
<dbReference type="Gene3D" id="1.10.10.2480">
    <property type="match status" value="1"/>
</dbReference>
<dbReference type="Gene3D" id="3.40.50.300">
    <property type="entry name" value="P-loop containing nucleotide triphosphate hydrolases"/>
    <property type="match status" value="1"/>
</dbReference>
<dbReference type="Gene3D" id="2.40.30.10">
    <property type="entry name" value="Translation factors"/>
    <property type="match status" value="2"/>
</dbReference>
<dbReference type="Gene3D" id="3.40.50.10050">
    <property type="entry name" value="Translation initiation factor IF- 2, domain 3"/>
    <property type="match status" value="1"/>
</dbReference>
<dbReference type="HAMAP" id="MF_00100_B">
    <property type="entry name" value="IF_2_B"/>
    <property type="match status" value="1"/>
</dbReference>
<dbReference type="InterPro" id="IPR053905">
    <property type="entry name" value="EF-G-like_DII"/>
</dbReference>
<dbReference type="InterPro" id="IPR004161">
    <property type="entry name" value="EFTu-like_2"/>
</dbReference>
<dbReference type="InterPro" id="IPR044145">
    <property type="entry name" value="IF2_II"/>
</dbReference>
<dbReference type="InterPro" id="IPR006847">
    <property type="entry name" value="IF2_N"/>
</dbReference>
<dbReference type="InterPro" id="IPR027417">
    <property type="entry name" value="P-loop_NTPase"/>
</dbReference>
<dbReference type="InterPro" id="IPR005225">
    <property type="entry name" value="Small_GTP-bd"/>
</dbReference>
<dbReference type="InterPro" id="IPR000795">
    <property type="entry name" value="T_Tr_GTP-bd_dom"/>
</dbReference>
<dbReference type="InterPro" id="IPR000178">
    <property type="entry name" value="TF_IF2_bacterial-like"/>
</dbReference>
<dbReference type="InterPro" id="IPR015760">
    <property type="entry name" value="TIF_IF2"/>
</dbReference>
<dbReference type="InterPro" id="IPR023115">
    <property type="entry name" value="TIF_IF2_dom3"/>
</dbReference>
<dbReference type="InterPro" id="IPR036925">
    <property type="entry name" value="TIF_IF2_dom3_sf"/>
</dbReference>
<dbReference type="InterPro" id="IPR009000">
    <property type="entry name" value="Transl_B-barrel_sf"/>
</dbReference>
<dbReference type="NCBIfam" id="TIGR00487">
    <property type="entry name" value="IF-2"/>
    <property type="match status" value="1"/>
</dbReference>
<dbReference type="NCBIfam" id="TIGR00231">
    <property type="entry name" value="small_GTP"/>
    <property type="match status" value="1"/>
</dbReference>
<dbReference type="PANTHER" id="PTHR43381:SF5">
    <property type="entry name" value="TR-TYPE G DOMAIN-CONTAINING PROTEIN"/>
    <property type="match status" value="1"/>
</dbReference>
<dbReference type="PANTHER" id="PTHR43381">
    <property type="entry name" value="TRANSLATION INITIATION FACTOR IF-2-RELATED"/>
    <property type="match status" value="1"/>
</dbReference>
<dbReference type="Pfam" id="PF22042">
    <property type="entry name" value="EF-G_D2"/>
    <property type="match status" value="1"/>
</dbReference>
<dbReference type="Pfam" id="PF00009">
    <property type="entry name" value="GTP_EFTU"/>
    <property type="match status" value="1"/>
</dbReference>
<dbReference type="Pfam" id="PF03144">
    <property type="entry name" value="GTP_EFTU_D2"/>
    <property type="match status" value="1"/>
</dbReference>
<dbReference type="Pfam" id="PF11987">
    <property type="entry name" value="IF-2"/>
    <property type="match status" value="1"/>
</dbReference>
<dbReference type="Pfam" id="PF04760">
    <property type="entry name" value="IF2_N"/>
    <property type="match status" value="2"/>
</dbReference>
<dbReference type="SUPFAM" id="SSF52156">
    <property type="entry name" value="Initiation factor IF2/eIF5b, domain 3"/>
    <property type="match status" value="1"/>
</dbReference>
<dbReference type="SUPFAM" id="SSF52540">
    <property type="entry name" value="P-loop containing nucleoside triphosphate hydrolases"/>
    <property type="match status" value="1"/>
</dbReference>
<dbReference type="SUPFAM" id="SSF50447">
    <property type="entry name" value="Translation proteins"/>
    <property type="match status" value="2"/>
</dbReference>
<dbReference type="PROSITE" id="PS51722">
    <property type="entry name" value="G_TR_2"/>
    <property type="match status" value="1"/>
</dbReference>
<dbReference type="PROSITE" id="PS01176">
    <property type="entry name" value="IF2"/>
    <property type="match status" value="1"/>
</dbReference>
<protein>
    <recommendedName>
        <fullName evidence="2">Translation initiation factor IF-2</fullName>
    </recommendedName>
</protein>
<accession>Q6AJY4</accession>
<gene>
    <name evidence="2" type="primary">infB</name>
    <name type="ordered locus">DP2613</name>
</gene>
<sequence>MSRIRIYELAKEAGMSGKAFADKLIKKGYQIKGHSSTVDDATADEIRRTFLGTKESGQDTGQATNEAAAAHRPTTVIGGKKVDEPVVPEKIVEEVQAVSVEVPKEVVAEEVKKSEPVKAEKSEPVIQEVAPVVEELVTNKEAPTAPLEREEESQLKAQKPTIEKEESAAVAKPEVVSAGSNEKKAGAPEIKRAEHTETVEKSKTAVDSKKVATPASTDKKVKPAQQPYRSGGVRVIGRVELPIQREEPSRPRRKPTRPPVNRSPRPSTPSPNRSAGGPPKPAAPATPAQDDSRNRKKKGRRDEKPAERDSRPKAKGKKGVKFTHFGTDYQNRGRRPRRGKRDAQTLPPSEMKASKKHVKVYDTITVGDLAGRMKVKASDVIGKLMGLGLMATINQSVDIDTATLIATEYGYEVDQGITDELGIQLLTEAEEGGIEVGRCPVVTVMGHVDHGKTSILDAIRKTDVADGEAGGITQHIGAYHVKAASGDVTFVDTPGHAAFTEMRSRGAQVTDIVILVVAADDGVMDQTREAIRHSQAANVPIIVAVNKIDKDNADVERVKRELAELDLSPEEWGGTTMYCETSAKQQIGIDELMESVQLAAEMLELKANPDRKVIGRVLEAQLDKGRGPVATILVQAGTLAKGDHFVVGQHSGKVRAMLDYRGRSLAEAGPSIPVEVQGLSGVPSAGDEFVVVTDEKMAKAVSHDRAMKAREAELGASTKISLDKLFEQMSEGEVRELRVVLRADVQGTLEAFAKAAADLSTKAIKVRLLHEGTGTITDSDILLASASDAIIIGFNVRPSAKVKALADKEHVDVRSYDVIYHALDDIRDAMVGMLDPTFEEEIIGDAEVRDIFSVPKIGVIGGCYVTSGKIQRNAGVRVLREGVVLYTGKIGSLRRFKDDAKEVASGYECGIGVENFNNIKIGDVLEAFIMNEVAATLGE</sequence>
<evidence type="ECO:0000250" key="1"/>
<evidence type="ECO:0000255" key="2">
    <source>
        <dbReference type="HAMAP-Rule" id="MF_00100"/>
    </source>
</evidence>
<evidence type="ECO:0000256" key="3">
    <source>
        <dbReference type="SAM" id="MobiDB-lite"/>
    </source>
</evidence>
<keyword id="KW-0963">Cytoplasm</keyword>
<keyword id="KW-0342">GTP-binding</keyword>
<keyword id="KW-0396">Initiation factor</keyword>
<keyword id="KW-0547">Nucleotide-binding</keyword>
<keyword id="KW-0648">Protein biosynthesis</keyword>
<keyword id="KW-1185">Reference proteome</keyword>
<feature type="chain" id="PRO_0000228191" description="Translation initiation factor IF-2">
    <location>
        <begin position="1"/>
        <end position="939"/>
    </location>
</feature>
<feature type="domain" description="tr-type G">
    <location>
        <begin position="437"/>
        <end position="606"/>
    </location>
</feature>
<feature type="region of interest" description="Disordered" evidence="3">
    <location>
        <begin position="51"/>
        <end position="81"/>
    </location>
</feature>
<feature type="region of interest" description="Disordered" evidence="3">
    <location>
        <begin position="137"/>
        <end position="353"/>
    </location>
</feature>
<feature type="region of interest" description="G1" evidence="1">
    <location>
        <begin position="446"/>
        <end position="453"/>
    </location>
</feature>
<feature type="region of interest" description="G2" evidence="1">
    <location>
        <begin position="471"/>
        <end position="475"/>
    </location>
</feature>
<feature type="region of interest" description="G3" evidence="1">
    <location>
        <begin position="492"/>
        <end position="495"/>
    </location>
</feature>
<feature type="region of interest" description="G4" evidence="1">
    <location>
        <begin position="546"/>
        <end position="549"/>
    </location>
</feature>
<feature type="region of interest" description="G5" evidence="1">
    <location>
        <begin position="582"/>
        <end position="584"/>
    </location>
</feature>
<feature type="compositionally biased region" description="Basic and acidic residues" evidence="3">
    <location>
        <begin position="181"/>
        <end position="210"/>
    </location>
</feature>
<feature type="compositionally biased region" description="Low complexity" evidence="3">
    <location>
        <begin position="259"/>
        <end position="277"/>
    </location>
</feature>
<feature type="compositionally biased region" description="Basic and acidic residues" evidence="3">
    <location>
        <begin position="300"/>
        <end position="312"/>
    </location>
</feature>
<feature type="binding site" evidence="2">
    <location>
        <begin position="446"/>
        <end position="453"/>
    </location>
    <ligand>
        <name>GTP</name>
        <dbReference type="ChEBI" id="CHEBI:37565"/>
    </ligand>
</feature>
<feature type="binding site" evidence="2">
    <location>
        <begin position="492"/>
        <end position="496"/>
    </location>
    <ligand>
        <name>GTP</name>
        <dbReference type="ChEBI" id="CHEBI:37565"/>
    </ligand>
</feature>
<feature type="binding site" evidence="2">
    <location>
        <begin position="546"/>
        <end position="549"/>
    </location>
    <ligand>
        <name>GTP</name>
        <dbReference type="ChEBI" id="CHEBI:37565"/>
    </ligand>
</feature>
<name>IF2_DESPS</name>
<reference key="1">
    <citation type="journal article" date="2004" name="Environ. Microbiol.">
        <title>The genome of Desulfotalea psychrophila, a sulfate-reducing bacterium from permanently cold Arctic sediments.</title>
        <authorList>
            <person name="Rabus R."/>
            <person name="Ruepp A."/>
            <person name="Frickey T."/>
            <person name="Rattei T."/>
            <person name="Fartmann B."/>
            <person name="Stark M."/>
            <person name="Bauer M."/>
            <person name="Zibat A."/>
            <person name="Lombardot T."/>
            <person name="Becker I."/>
            <person name="Amann J."/>
            <person name="Gellner K."/>
            <person name="Teeling H."/>
            <person name="Leuschner W.D."/>
            <person name="Gloeckner F.-O."/>
            <person name="Lupas A.N."/>
            <person name="Amann R."/>
            <person name="Klenk H.-P."/>
        </authorList>
    </citation>
    <scope>NUCLEOTIDE SEQUENCE [LARGE SCALE GENOMIC DNA]</scope>
    <source>
        <strain>DSM 12343 / LSv54</strain>
    </source>
</reference>
<comment type="function">
    <text evidence="2">One of the essential components for the initiation of protein synthesis. Protects formylmethionyl-tRNA from spontaneous hydrolysis and promotes its binding to the 30S ribosomal subunits. Also involved in the hydrolysis of GTP during the formation of the 70S ribosomal complex.</text>
</comment>
<comment type="subcellular location">
    <subcellularLocation>
        <location evidence="2">Cytoplasm</location>
    </subcellularLocation>
</comment>
<comment type="similarity">
    <text evidence="2">Belongs to the TRAFAC class translation factor GTPase superfamily. Classic translation factor GTPase family. IF-2 subfamily.</text>
</comment>